<evidence type="ECO:0000250" key="1"/>
<evidence type="ECO:0000250" key="2">
    <source>
        <dbReference type="UniProtKB" id="P09064"/>
    </source>
</evidence>
<evidence type="ECO:0000250" key="3">
    <source>
        <dbReference type="UniProtKB" id="P56329"/>
    </source>
</evidence>
<evidence type="ECO:0000255" key="4"/>
<evidence type="ECO:0000256" key="5">
    <source>
        <dbReference type="SAM" id="MobiDB-lite"/>
    </source>
</evidence>
<evidence type="ECO:0000269" key="6">
    <source>
    </source>
</evidence>
<evidence type="ECO:0000305" key="7"/>
<evidence type="ECO:0007744" key="8">
    <source>
    </source>
</evidence>
<organism>
    <name type="scientific">Arabidopsis thaliana</name>
    <name type="common">Mouse-ear cress</name>
    <dbReference type="NCBI Taxonomy" id="3702"/>
    <lineage>
        <taxon>Eukaryota</taxon>
        <taxon>Viridiplantae</taxon>
        <taxon>Streptophyta</taxon>
        <taxon>Embryophyta</taxon>
        <taxon>Tracheophyta</taxon>
        <taxon>Spermatophyta</taxon>
        <taxon>Magnoliopsida</taxon>
        <taxon>eudicotyledons</taxon>
        <taxon>Gunneridae</taxon>
        <taxon>Pentapetalae</taxon>
        <taxon>rosids</taxon>
        <taxon>malvids</taxon>
        <taxon>Brassicales</taxon>
        <taxon>Brassicaceae</taxon>
        <taxon>Camelineae</taxon>
        <taxon>Arabidopsis</taxon>
    </lineage>
</organism>
<feature type="initiator methionine" description="Removed" evidence="8">
    <location>
        <position position="1"/>
    </location>
</feature>
<feature type="chain" id="PRO_0000137411" description="Eukaryotic translation initiation factor 2 subunit beta">
    <location>
        <begin position="2"/>
        <end position="268"/>
    </location>
</feature>
<feature type="zinc finger region" description="C4-type" evidence="4">
    <location>
        <begin position="222"/>
        <end position="246"/>
    </location>
</feature>
<feature type="region of interest" description="Disordered" evidence="5">
    <location>
        <begin position="1"/>
        <end position="85"/>
    </location>
</feature>
<feature type="compositionally biased region" description="Basic and acidic residues" evidence="5">
    <location>
        <begin position="1"/>
        <end position="12"/>
    </location>
</feature>
<feature type="modified residue" description="N-acetylalanine" evidence="8">
    <location>
        <position position="2"/>
    </location>
</feature>
<feature type="modified residue" description="Phosphoserine; by CK2" evidence="6">
    <location>
        <position position="42"/>
    </location>
</feature>
<feature type="modified residue" description="Phosphoserine; by CK2" evidence="6">
    <location>
        <position position="80"/>
    </location>
</feature>
<feature type="modified residue" description="Phosphoserine; by CK2" evidence="6">
    <location>
        <position position="112"/>
    </location>
</feature>
<feature type="splice variant" id="VSP_058490" description="In isoform 2.">
    <location>
        <position position="14"/>
    </location>
</feature>
<feature type="sequence conflict" description="In Ref. 1; AAK29672 and 6; AAM65346." evidence="7" ref="1 6">
    <original>T</original>
    <variation>A</variation>
    <location>
        <position position="71"/>
    </location>
</feature>
<keyword id="KW-0007">Acetylation</keyword>
<keyword id="KW-0025">Alternative splicing</keyword>
<keyword id="KW-0963">Cytoplasm</keyword>
<keyword id="KW-0396">Initiation factor</keyword>
<keyword id="KW-0479">Metal-binding</keyword>
<keyword id="KW-0597">Phosphoprotein</keyword>
<keyword id="KW-0648">Protein biosynthesis</keyword>
<keyword id="KW-1185">Reference proteome</keyword>
<keyword id="KW-0862">Zinc</keyword>
<keyword id="KW-0863">Zinc-finger</keyword>
<reference key="1">
    <citation type="submission" date="2001-02" db="EMBL/GenBank/DDBJ databases">
        <title>Arabidopsis thaliana protein synthesis initiation factor eIF2 beta mRNA.</title>
        <authorList>
            <person name="Browning K.S."/>
            <person name="Chen R."/>
        </authorList>
    </citation>
    <scope>NUCLEOTIDE SEQUENCE [MRNA] (ISOFORM 1)</scope>
</reference>
<reference key="2">
    <citation type="journal article" date="2000" name="Nature">
        <title>Sequence and analysis of chromosome 5 of the plant Arabidopsis thaliana.</title>
        <authorList>
            <person name="Tabata S."/>
            <person name="Kaneko T."/>
            <person name="Nakamura Y."/>
            <person name="Kotani H."/>
            <person name="Kato T."/>
            <person name="Asamizu E."/>
            <person name="Miyajima N."/>
            <person name="Sasamoto S."/>
            <person name="Kimura T."/>
            <person name="Hosouchi T."/>
            <person name="Kawashima K."/>
            <person name="Kohara M."/>
            <person name="Matsumoto M."/>
            <person name="Matsuno A."/>
            <person name="Muraki A."/>
            <person name="Nakayama S."/>
            <person name="Nakazaki N."/>
            <person name="Naruo K."/>
            <person name="Okumura S."/>
            <person name="Shinpo S."/>
            <person name="Takeuchi C."/>
            <person name="Wada T."/>
            <person name="Watanabe A."/>
            <person name="Yamada M."/>
            <person name="Yasuda M."/>
            <person name="Sato S."/>
            <person name="de la Bastide M."/>
            <person name="Huang E."/>
            <person name="Spiegel L."/>
            <person name="Gnoj L."/>
            <person name="O'Shaughnessy A."/>
            <person name="Preston R."/>
            <person name="Habermann K."/>
            <person name="Murray J."/>
            <person name="Johnson D."/>
            <person name="Rohlfing T."/>
            <person name="Nelson J."/>
            <person name="Stoneking T."/>
            <person name="Pepin K."/>
            <person name="Spieth J."/>
            <person name="Sekhon M."/>
            <person name="Armstrong J."/>
            <person name="Becker M."/>
            <person name="Belter E."/>
            <person name="Cordum H."/>
            <person name="Cordes M."/>
            <person name="Courtney L."/>
            <person name="Courtney W."/>
            <person name="Dante M."/>
            <person name="Du H."/>
            <person name="Edwards J."/>
            <person name="Fryman J."/>
            <person name="Haakensen B."/>
            <person name="Lamar E."/>
            <person name="Latreille P."/>
            <person name="Leonard S."/>
            <person name="Meyer R."/>
            <person name="Mulvaney E."/>
            <person name="Ozersky P."/>
            <person name="Riley A."/>
            <person name="Strowmatt C."/>
            <person name="Wagner-McPherson C."/>
            <person name="Wollam A."/>
            <person name="Yoakum M."/>
            <person name="Bell M."/>
            <person name="Dedhia N."/>
            <person name="Parnell L."/>
            <person name="Shah R."/>
            <person name="Rodriguez M."/>
            <person name="Hoon See L."/>
            <person name="Vil D."/>
            <person name="Baker J."/>
            <person name="Kirchoff K."/>
            <person name="Toth K."/>
            <person name="King L."/>
            <person name="Bahret A."/>
            <person name="Miller B."/>
            <person name="Marra M.A."/>
            <person name="Martienssen R."/>
            <person name="McCombie W.R."/>
            <person name="Wilson R.K."/>
            <person name="Murphy G."/>
            <person name="Bancroft I."/>
            <person name="Volckaert G."/>
            <person name="Wambutt R."/>
            <person name="Duesterhoeft A."/>
            <person name="Stiekema W."/>
            <person name="Pohl T."/>
            <person name="Entian K.-D."/>
            <person name="Terryn N."/>
            <person name="Hartley N."/>
            <person name="Bent E."/>
            <person name="Johnson S."/>
            <person name="Langham S.-A."/>
            <person name="McCullagh B."/>
            <person name="Robben J."/>
            <person name="Grymonprez B."/>
            <person name="Zimmermann W."/>
            <person name="Ramsperger U."/>
            <person name="Wedler H."/>
            <person name="Balke K."/>
            <person name="Wedler E."/>
            <person name="Peters S."/>
            <person name="van Staveren M."/>
            <person name="Dirkse W."/>
            <person name="Mooijman P."/>
            <person name="Klein Lankhorst R."/>
            <person name="Weitzenegger T."/>
            <person name="Bothe G."/>
            <person name="Rose M."/>
            <person name="Hauf J."/>
            <person name="Berneiser S."/>
            <person name="Hempel S."/>
            <person name="Feldpausch M."/>
            <person name="Lamberth S."/>
            <person name="Villarroel R."/>
            <person name="Gielen J."/>
            <person name="Ardiles W."/>
            <person name="Bents O."/>
            <person name="Lemcke K."/>
            <person name="Kolesov G."/>
            <person name="Mayer K.F.X."/>
            <person name="Rudd S."/>
            <person name="Schoof H."/>
            <person name="Schueller C."/>
            <person name="Zaccaria P."/>
            <person name="Mewes H.-W."/>
            <person name="Bevan M."/>
            <person name="Fransz P.F."/>
        </authorList>
    </citation>
    <scope>NUCLEOTIDE SEQUENCE [LARGE SCALE GENOMIC DNA]</scope>
    <source>
        <strain>cv. Columbia</strain>
    </source>
</reference>
<reference key="3">
    <citation type="journal article" date="2017" name="Plant J.">
        <title>Araport11: a complete reannotation of the Arabidopsis thaliana reference genome.</title>
        <authorList>
            <person name="Cheng C.Y."/>
            <person name="Krishnakumar V."/>
            <person name="Chan A.P."/>
            <person name="Thibaud-Nissen F."/>
            <person name="Schobel S."/>
            <person name="Town C.D."/>
        </authorList>
    </citation>
    <scope>GENOME REANNOTATION</scope>
    <source>
        <strain>cv. Columbia</strain>
    </source>
</reference>
<reference key="4">
    <citation type="journal article" date="2003" name="Science">
        <title>Empirical analysis of transcriptional activity in the Arabidopsis genome.</title>
        <authorList>
            <person name="Yamada K."/>
            <person name="Lim J."/>
            <person name="Dale J.M."/>
            <person name="Chen H."/>
            <person name="Shinn P."/>
            <person name="Palm C.J."/>
            <person name="Southwick A.M."/>
            <person name="Wu H.C."/>
            <person name="Kim C.J."/>
            <person name="Nguyen M."/>
            <person name="Pham P.K."/>
            <person name="Cheuk R.F."/>
            <person name="Karlin-Newmann G."/>
            <person name="Liu S.X."/>
            <person name="Lam B."/>
            <person name="Sakano H."/>
            <person name="Wu T."/>
            <person name="Yu G."/>
            <person name="Miranda M."/>
            <person name="Quach H.L."/>
            <person name="Tripp M."/>
            <person name="Chang C.H."/>
            <person name="Lee J.M."/>
            <person name="Toriumi M.J."/>
            <person name="Chan M.M."/>
            <person name="Tang C.C."/>
            <person name="Onodera C.S."/>
            <person name="Deng J.M."/>
            <person name="Akiyama K."/>
            <person name="Ansari Y."/>
            <person name="Arakawa T."/>
            <person name="Banh J."/>
            <person name="Banno F."/>
            <person name="Bowser L."/>
            <person name="Brooks S.Y."/>
            <person name="Carninci P."/>
            <person name="Chao Q."/>
            <person name="Choy N."/>
            <person name="Enju A."/>
            <person name="Goldsmith A.D."/>
            <person name="Gurjal M."/>
            <person name="Hansen N.F."/>
            <person name="Hayashizaki Y."/>
            <person name="Johnson-Hopson C."/>
            <person name="Hsuan V.W."/>
            <person name="Iida K."/>
            <person name="Karnes M."/>
            <person name="Khan S."/>
            <person name="Koesema E."/>
            <person name="Ishida J."/>
            <person name="Jiang P.X."/>
            <person name="Jones T."/>
            <person name="Kawai J."/>
            <person name="Kamiya A."/>
            <person name="Meyers C."/>
            <person name="Nakajima M."/>
            <person name="Narusaka M."/>
            <person name="Seki M."/>
            <person name="Sakurai T."/>
            <person name="Satou M."/>
            <person name="Tamse R."/>
            <person name="Vaysberg M."/>
            <person name="Wallender E.K."/>
            <person name="Wong C."/>
            <person name="Yamamura Y."/>
            <person name="Yuan S."/>
            <person name="Shinozaki K."/>
            <person name="Davis R.W."/>
            <person name="Theologis A."/>
            <person name="Ecker J.R."/>
        </authorList>
    </citation>
    <scope>NUCLEOTIDE SEQUENCE [LARGE SCALE MRNA] (ISOFORM 1)</scope>
    <source>
        <strain>cv. Columbia</strain>
    </source>
</reference>
<reference key="5">
    <citation type="journal article" date="2004" name="Genome Res.">
        <title>Whole genome sequence comparisons and 'full-length' cDNA sequences: a combined approach to evaluate and improve Arabidopsis genome annotation.</title>
        <authorList>
            <person name="Castelli V."/>
            <person name="Aury J.-M."/>
            <person name="Jaillon O."/>
            <person name="Wincker P."/>
            <person name="Clepet C."/>
            <person name="Menard M."/>
            <person name="Cruaud C."/>
            <person name="Quetier F."/>
            <person name="Scarpelli C."/>
            <person name="Schaechter V."/>
            <person name="Temple G."/>
            <person name="Caboche M."/>
            <person name="Weissenbach J."/>
            <person name="Salanoubat M."/>
        </authorList>
    </citation>
    <scope>NUCLEOTIDE SEQUENCE [LARGE SCALE MRNA] (ISOFORM 2)</scope>
    <source>
        <strain>cv. Columbia</strain>
    </source>
</reference>
<reference key="6">
    <citation type="submission" date="2002-03" db="EMBL/GenBank/DDBJ databases">
        <title>Full-length cDNA from Arabidopsis thaliana.</title>
        <authorList>
            <person name="Brover V.V."/>
            <person name="Troukhan M.E."/>
            <person name="Alexandrov N.A."/>
            <person name="Lu Y.-P."/>
            <person name="Flavell R.B."/>
            <person name="Feldmann K.A."/>
        </authorList>
    </citation>
    <scope>NUCLEOTIDE SEQUENCE [LARGE SCALE MRNA] (ISOFORM 1)</scope>
</reference>
<reference key="7">
    <citation type="journal article" date="1993" name="Plant J.">
        <title>An inventory of 1152 expressed sequence tags obtained by partial sequencing of cDNAs from Arabidopsis thaliana.</title>
        <authorList>
            <person name="Hoefte H."/>
            <person name="Desprez T."/>
            <person name="Amselem J."/>
            <person name="Chiapello H."/>
            <person name="Rouze P."/>
            <person name="Caboche M."/>
            <person name="Moisan A."/>
            <person name="Jourjon M.-F."/>
            <person name="Charpenteau J.-L."/>
            <person name="Berthomieu P."/>
            <person name="Guerrier D."/>
            <person name="Giraudat J."/>
            <person name="Quigley F."/>
            <person name="Thomas F."/>
            <person name="Yu D.-Y."/>
            <person name="Mache R."/>
            <person name="Raynal M."/>
            <person name="Cooke R."/>
            <person name="Grellet F."/>
            <person name="Delseny M."/>
            <person name="Parmentier Y."/>
            <person name="de Marcillac G."/>
            <person name="Gigot C."/>
            <person name="Fleck J."/>
            <person name="Philipps G."/>
            <person name="Axelos M."/>
            <person name="Bardet C."/>
            <person name="Tremousaygue D."/>
            <person name="Lescure B."/>
        </authorList>
    </citation>
    <scope>NUCLEOTIDE SEQUENCE [LARGE SCALE MRNA] OF 97-252</scope>
    <source>
        <strain>cv. Columbia</strain>
        <tissue>Seedling</tissue>
    </source>
</reference>
<reference key="8">
    <citation type="journal article" date="2009" name="J. Biol. Chem.">
        <title>Phosphorylation of plant translation initiation factors by CK2 enhances the in vitro interaction of multifactor complex components.</title>
        <authorList>
            <person name="Dennis M.D."/>
            <person name="Person M.D."/>
            <person name="Browning K.S."/>
        </authorList>
    </citation>
    <scope>PHOSPHORYLATION AT SER-42; SER-80 AND SER-112</scope>
</reference>
<reference key="9">
    <citation type="journal article" date="2012" name="Mol. Cell. Proteomics">
        <title>Comparative large-scale characterisation of plant vs. mammal proteins reveals similar and idiosyncratic N-alpha acetylation features.</title>
        <authorList>
            <person name="Bienvenut W.V."/>
            <person name="Sumpton D."/>
            <person name="Martinez A."/>
            <person name="Lilla S."/>
            <person name="Espagne C."/>
            <person name="Meinnel T."/>
            <person name="Giglione C."/>
        </authorList>
    </citation>
    <scope>ACETYLATION [LARGE SCALE ANALYSIS] AT ALA-2</scope>
    <scope>CLEAVAGE OF INITIATOR METHIONINE [LARGE SCALE ANALYSIS]</scope>
    <scope>IDENTIFICATION BY MASS SPECTROMETRY [LARGE SCALE ANALYSIS]</scope>
</reference>
<gene>
    <name evidence="7" type="primary">EIF2B</name>
    <name evidence="7" type="synonym">EMB1401</name>
    <name type="ordered locus">At5g20920</name>
    <name type="ORF">F22D1.90</name>
</gene>
<dbReference type="EMBL" id="AF353095">
    <property type="protein sequence ID" value="AAK29672.1"/>
    <property type="molecule type" value="mRNA"/>
</dbReference>
<dbReference type="EMBL" id="AF296834">
    <property type="status" value="NOT_ANNOTATED_CDS"/>
    <property type="molecule type" value="Genomic_DNA"/>
</dbReference>
<dbReference type="EMBL" id="CP002688">
    <property type="protein sequence ID" value="AED92904.1"/>
    <property type="molecule type" value="Genomic_DNA"/>
</dbReference>
<dbReference type="EMBL" id="CP002688">
    <property type="protein sequence ID" value="AED92905.1"/>
    <property type="molecule type" value="Genomic_DNA"/>
</dbReference>
<dbReference type="EMBL" id="CP002688">
    <property type="protein sequence ID" value="AED92906.1"/>
    <property type="molecule type" value="Genomic_DNA"/>
</dbReference>
<dbReference type="EMBL" id="AY128324">
    <property type="protein sequence ID" value="AAM91527.1"/>
    <property type="molecule type" value="mRNA"/>
</dbReference>
<dbReference type="EMBL" id="BT000056">
    <property type="protein sequence ID" value="AAN15375.1"/>
    <property type="molecule type" value="mRNA"/>
</dbReference>
<dbReference type="EMBL" id="BX829594">
    <property type="status" value="NOT_ANNOTATED_CDS"/>
    <property type="molecule type" value="mRNA"/>
</dbReference>
<dbReference type="EMBL" id="AY087810">
    <property type="protein sequence ID" value="AAM65346.1"/>
    <property type="molecule type" value="mRNA"/>
</dbReference>
<dbReference type="EMBL" id="Z18133">
    <property type="protein sequence ID" value="CAA79110.1"/>
    <property type="molecule type" value="mRNA"/>
</dbReference>
<dbReference type="RefSeq" id="NP_001078610.1">
    <molecule id="Q41969-1"/>
    <property type="nucleotide sequence ID" value="NM_001085141.1"/>
</dbReference>
<dbReference type="RefSeq" id="NP_197592.1">
    <molecule id="Q41969-1"/>
    <property type="nucleotide sequence ID" value="NM_122100.4"/>
</dbReference>
<dbReference type="RefSeq" id="NP_974817.1">
    <molecule id="Q41969-2"/>
    <property type="nucleotide sequence ID" value="NM_203088.2"/>
</dbReference>
<dbReference type="SMR" id="Q41969"/>
<dbReference type="BioGRID" id="17491">
    <property type="interactions" value="41"/>
</dbReference>
<dbReference type="FunCoup" id="Q41969">
    <property type="interactions" value="4757"/>
</dbReference>
<dbReference type="IntAct" id="Q41969">
    <property type="interactions" value="33"/>
</dbReference>
<dbReference type="STRING" id="3702.Q41969"/>
<dbReference type="iPTMnet" id="Q41969"/>
<dbReference type="MetOSite" id="Q41969"/>
<dbReference type="PaxDb" id="3702-AT5G20920.3"/>
<dbReference type="ProteomicsDB" id="228815">
    <molecule id="Q41969-1"/>
</dbReference>
<dbReference type="EnsemblPlants" id="AT5G20920.1">
    <molecule id="Q41969-1"/>
    <property type="protein sequence ID" value="AT5G20920.1"/>
    <property type="gene ID" value="AT5G20920"/>
</dbReference>
<dbReference type="EnsemblPlants" id="AT5G20920.2">
    <molecule id="Q41969-2"/>
    <property type="protein sequence ID" value="AT5G20920.2"/>
    <property type="gene ID" value="AT5G20920"/>
</dbReference>
<dbReference type="EnsemblPlants" id="AT5G20920.3">
    <molecule id="Q41969-1"/>
    <property type="protein sequence ID" value="AT5G20920.3"/>
    <property type="gene ID" value="AT5G20920"/>
</dbReference>
<dbReference type="GeneID" id="832216"/>
<dbReference type="Gramene" id="AT5G20920.1">
    <molecule id="Q41969-1"/>
    <property type="protein sequence ID" value="AT5G20920.1"/>
    <property type="gene ID" value="AT5G20920"/>
</dbReference>
<dbReference type="Gramene" id="AT5G20920.2">
    <molecule id="Q41969-2"/>
    <property type="protein sequence ID" value="AT5G20920.2"/>
    <property type="gene ID" value="AT5G20920"/>
</dbReference>
<dbReference type="Gramene" id="AT5G20920.3">
    <molecule id="Q41969-1"/>
    <property type="protein sequence ID" value="AT5G20920.3"/>
    <property type="gene ID" value="AT5G20920"/>
</dbReference>
<dbReference type="KEGG" id="ath:AT5G20920"/>
<dbReference type="Araport" id="AT5G20920"/>
<dbReference type="TAIR" id="AT5G20920">
    <property type="gene designation" value="EIF2 BETA"/>
</dbReference>
<dbReference type="eggNOG" id="KOG2768">
    <property type="taxonomic scope" value="Eukaryota"/>
</dbReference>
<dbReference type="InParanoid" id="Q41969"/>
<dbReference type="OMA" id="ATGYPWE"/>
<dbReference type="PhylomeDB" id="Q41969"/>
<dbReference type="CD-CODE" id="4299E36E">
    <property type="entry name" value="Nucleolus"/>
</dbReference>
<dbReference type="PRO" id="PR:Q41969"/>
<dbReference type="Proteomes" id="UP000006548">
    <property type="component" value="Chromosome 5"/>
</dbReference>
<dbReference type="ExpressionAtlas" id="Q41969">
    <property type="expression patterns" value="baseline and differential"/>
</dbReference>
<dbReference type="GO" id="GO:0005829">
    <property type="term" value="C:cytosol"/>
    <property type="evidence" value="ECO:0007669"/>
    <property type="project" value="UniProtKB-SubCell"/>
</dbReference>
<dbReference type="GO" id="GO:0005850">
    <property type="term" value="C:eukaryotic translation initiation factor 2 complex"/>
    <property type="evidence" value="ECO:0000250"/>
    <property type="project" value="UniProtKB"/>
</dbReference>
<dbReference type="GO" id="GO:0009536">
    <property type="term" value="C:plastid"/>
    <property type="evidence" value="ECO:0007005"/>
    <property type="project" value="TAIR"/>
</dbReference>
<dbReference type="GO" id="GO:0003743">
    <property type="term" value="F:translation initiation factor activity"/>
    <property type="evidence" value="ECO:0007669"/>
    <property type="project" value="UniProtKB-KW"/>
</dbReference>
<dbReference type="GO" id="GO:0008270">
    <property type="term" value="F:zinc ion binding"/>
    <property type="evidence" value="ECO:0007669"/>
    <property type="project" value="UniProtKB-KW"/>
</dbReference>
<dbReference type="GO" id="GO:0002183">
    <property type="term" value="P:cytoplasmic translational initiation"/>
    <property type="evidence" value="ECO:0000250"/>
    <property type="project" value="UniProtKB"/>
</dbReference>
<dbReference type="FunFam" id="3.30.30.170:FF:000001">
    <property type="entry name" value="Eukaryotic translation initiation factor 2 subunit"/>
    <property type="match status" value="1"/>
</dbReference>
<dbReference type="Gene3D" id="3.30.30.170">
    <property type="match status" value="1"/>
</dbReference>
<dbReference type="InterPro" id="IPR045196">
    <property type="entry name" value="IF2/IF5"/>
</dbReference>
<dbReference type="InterPro" id="IPR002735">
    <property type="entry name" value="Transl_init_fac_IF2/IF5_dom"/>
</dbReference>
<dbReference type="InterPro" id="IPR016189">
    <property type="entry name" value="Transl_init_fac_IF2/IF5_N"/>
</dbReference>
<dbReference type="InterPro" id="IPR016190">
    <property type="entry name" value="Transl_init_fac_IF2/IF5_Zn-bd"/>
</dbReference>
<dbReference type="PANTHER" id="PTHR23001">
    <property type="entry name" value="EUKARYOTIC TRANSLATION INITIATION FACTOR"/>
    <property type="match status" value="1"/>
</dbReference>
<dbReference type="PANTHER" id="PTHR23001:SF3">
    <property type="entry name" value="EUKARYOTIC TRANSLATION INITIATION FACTOR 2 SUBUNIT 2"/>
    <property type="match status" value="1"/>
</dbReference>
<dbReference type="Pfam" id="PF01873">
    <property type="entry name" value="eIF-5_eIF-2B"/>
    <property type="match status" value="1"/>
</dbReference>
<dbReference type="SMART" id="SM00653">
    <property type="entry name" value="eIF2B_5"/>
    <property type="match status" value="1"/>
</dbReference>
<dbReference type="SUPFAM" id="SSF100966">
    <property type="entry name" value="Translation initiation factor 2 beta, aIF2beta, N-terminal domain"/>
    <property type="match status" value="1"/>
</dbReference>
<dbReference type="SUPFAM" id="SSF75689">
    <property type="entry name" value="Zinc-binding domain of translation initiation factor 2 beta"/>
    <property type="match status" value="1"/>
</dbReference>
<name>IF2B_ARATH</name>
<sequence length="268" mass="30663">MADEINEIREEQEQLAPFDPSKKKKKKKVVIQEPVEDLAESSQTEKSDSLPVNDGLESSFTGMKKKKKKPTESSLLNNESVDAGEDLDEIANDEQEGEEGIVLQQRYPWEGSERDYIYDELLGRVFNILRENNPELAGDRRRTVMRPPQVLREGTKKTVFVNFMDLCKTMHRQPDHVMQYLLAELGTSGSLDGQQRLVVKGRFAPKNFEGILRRYITDYVICLGCKSPDTILSKENRLFFLRCEKCGSQRSVAPIKTGFVARVSRRKT</sequence>
<proteinExistence type="evidence at protein level"/>
<protein>
    <recommendedName>
        <fullName evidence="7">Eukaryotic translation initiation factor 2 subunit beta</fullName>
        <shortName evidence="7">eIF2-beta</shortName>
    </recommendedName>
    <alternativeName>
        <fullName evidence="7">Protein EMBRYO DEFECTIVE 1401</fullName>
    </alternativeName>
</protein>
<comment type="function">
    <text evidence="1">Component of the eIF2 complex that functions in the early steps of protein synthesis by forming a ternary complex with GTP and initiator tRNA. This complex binds to a 40S ribosomal subunit, followed by mRNA binding to form a 43S pre-initiation complex (43S PIC). Junction of the 60S ribosomal subunit to form the 80S initiation complex is preceded by hydrolysis of the GTP bound to eIF2 and release of an eIF2-GDP binary complex. In order for eIF2 to recycle and catalyze another round of initiation, the GDP bound to eIF2 must exchange with GTP by way of a reaction catalyzed by eIF2B (By similarity).</text>
</comment>
<comment type="subunit">
    <text evidence="2">Eukaryotic translation initiation factor 2 eIF2 is a heterotrimeric complex composed of an alpha, a beta and a gamma subunit.</text>
</comment>
<comment type="interaction">
    <interactant intactId="EBI-2130789">
        <id>Q41969</id>
    </interactant>
    <interactant intactId="EBI-25506855">
        <id>O23160</id>
        <label>MYB73</label>
    </interactant>
    <organismsDiffer>false</organismsDiffer>
    <experiments>3</experiments>
</comment>
<comment type="subcellular location">
    <subcellularLocation>
        <location evidence="3">Cytoplasm</location>
        <location evidence="3">Cytosol</location>
    </subcellularLocation>
</comment>
<comment type="alternative products">
    <event type="alternative splicing"/>
    <isoform>
        <id>Q41969-1</id>
        <name>1</name>
        <sequence type="displayed"/>
    </isoform>
    <isoform>
        <id>Q41969-2</id>
        <name>2</name>
        <sequence type="described" ref="VSP_058490"/>
    </isoform>
</comment>
<comment type="PTM">
    <text evidence="6">Phosphorylated at Ser-42, Ser-80 and Ser-112 by CK2.</text>
</comment>
<comment type="miscellaneous">
    <molecule>Isoform 2</molecule>
    <text evidence="7">May be due to a competing acceptor splice site.</text>
</comment>
<comment type="similarity">
    <text evidence="7">Belongs to the eIF-2-beta/eIF-5 family.</text>
</comment>
<accession>Q41969</accession>
<accession>F4K6W6</accession>
<accession>Q8L7Q3</accession>
<accession>Q9C5N7</accession>